<gene>
    <name evidence="1" type="primary">nanM</name>
    <name type="ordered locus">PM1707</name>
</gene>
<feature type="signal peptide" evidence="1">
    <location>
        <begin position="1"/>
        <end position="21"/>
    </location>
</feature>
<feature type="chain" id="PRO_0000016657" description="N-acetylneuraminate epimerase">
    <location>
        <begin position="22"/>
        <end position="380"/>
    </location>
</feature>
<feature type="repeat" description="Kelch 1">
    <location>
        <begin position="42"/>
        <end position="86"/>
    </location>
</feature>
<feature type="repeat" description="Kelch 2">
    <location>
        <begin position="88"/>
        <end position="140"/>
    </location>
</feature>
<feature type="repeat" description="Kelch 3">
    <location>
        <begin position="142"/>
        <end position="176"/>
    </location>
</feature>
<feature type="repeat" description="Kelch 4">
    <location>
        <begin position="177"/>
        <end position="222"/>
    </location>
</feature>
<feature type="repeat" description="Kelch 5">
    <location>
        <begin position="225"/>
        <end position="274"/>
    </location>
</feature>
<feature type="repeat" description="Kelch 6">
    <location>
        <begin position="296"/>
        <end position="349"/>
    </location>
</feature>
<feature type="repeat" description="Kelch 7">
    <location>
        <begin position="351"/>
        <end position="380"/>
    </location>
</feature>
<feature type="active site" description="Proton acceptor" evidence="1">
    <location>
        <position position="231"/>
    </location>
</feature>
<accession>Q9CKB7</accession>
<proteinExistence type="inferred from homology"/>
<dbReference type="EC" id="5.1.3.24" evidence="1"/>
<dbReference type="EMBL" id="AE004439">
    <property type="protein sequence ID" value="AAK03791.1"/>
    <property type="molecule type" value="Genomic_DNA"/>
</dbReference>
<dbReference type="RefSeq" id="WP_005724596.1">
    <property type="nucleotide sequence ID" value="NC_002663.1"/>
</dbReference>
<dbReference type="SMR" id="Q9CKB7"/>
<dbReference type="STRING" id="272843.PM1707"/>
<dbReference type="EnsemblBacteria" id="AAK03791">
    <property type="protein sequence ID" value="AAK03791"/>
    <property type="gene ID" value="PM1707"/>
</dbReference>
<dbReference type="KEGG" id="pmu:PM1707"/>
<dbReference type="HOGENOM" id="CLU_061535_0_0_6"/>
<dbReference type="OrthoDB" id="198899at2"/>
<dbReference type="Proteomes" id="UP000000809">
    <property type="component" value="Chromosome"/>
</dbReference>
<dbReference type="GO" id="GO:0042597">
    <property type="term" value="C:periplasmic space"/>
    <property type="evidence" value="ECO:0007669"/>
    <property type="project" value="UniProtKB-SubCell"/>
</dbReference>
<dbReference type="GO" id="GO:0016857">
    <property type="term" value="F:racemase and epimerase activity, acting on carbohydrates and derivatives"/>
    <property type="evidence" value="ECO:0007669"/>
    <property type="project" value="UniProtKB-UniRule"/>
</dbReference>
<dbReference type="Gene3D" id="2.120.10.80">
    <property type="entry name" value="Kelch-type beta propeller"/>
    <property type="match status" value="2"/>
</dbReference>
<dbReference type="HAMAP" id="MF_01195">
    <property type="entry name" value="NanM"/>
    <property type="match status" value="1"/>
</dbReference>
<dbReference type="InterPro" id="IPR015915">
    <property type="entry name" value="Kelch-typ_b-propeller"/>
</dbReference>
<dbReference type="InterPro" id="IPR056734">
    <property type="entry name" value="NANM"/>
</dbReference>
<dbReference type="InterPro" id="IPR019936">
    <property type="entry name" value="NanM_proteobact"/>
</dbReference>
<dbReference type="NCBIfam" id="TIGR03547">
    <property type="entry name" value="muta_rot_YjhT"/>
    <property type="match status" value="1"/>
</dbReference>
<dbReference type="NCBIfam" id="NF010730">
    <property type="entry name" value="PRK14131.1"/>
    <property type="match status" value="1"/>
</dbReference>
<dbReference type="PANTHER" id="PTHR24412">
    <property type="entry name" value="KELCH PROTEIN"/>
    <property type="match status" value="1"/>
</dbReference>
<dbReference type="PANTHER" id="PTHR24412:SF441">
    <property type="entry name" value="KELCH-LIKE PROTEIN 28"/>
    <property type="match status" value="1"/>
</dbReference>
<dbReference type="Pfam" id="PF24996">
    <property type="entry name" value="NANM"/>
    <property type="match status" value="1"/>
</dbReference>
<dbReference type="SUPFAM" id="SSF117281">
    <property type="entry name" value="Kelch motif"/>
    <property type="match status" value="1"/>
</dbReference>
<evidence type="ECO:0000255" key="1">
    <source>
        <dbReference type="HAMAP-Rule" id="MF_01195"/>
    </source>
</evidence>
<name>NANM_PASMU</name>
<organism>
    <name type="scientific">Pasteurella multocida (strain Pm70)</name>
    <dbReference type="NCBI Taxonomy" id="272843"/>
    <lineage>
        <taxon>Bacteria</taxon>
        <taxon>Pseudomonadati</taxon>
        <taxon>Pseudomonadota</taxon>
        <taxon>Gammaproteobacteria</taxon>
        <taxon>Pasteurellales</taxon>
        <taxon>Pasteurellaceae</taxon>
        <taxon>Pasteurella</taxon>
    </lineage>
</organism>
<protein>
    <recommendedName>
        <fullName evidence="1">N-acetylneuraminate epimerase</fullName>
        <ecNumber evidence="1">5.1.3.24</ecNumber>
    </recommendedName>
    <alternativeName>
        <fullName evidence="1">N-acetylneuraminate mutarotase</fullName>
        <shortName evidence="1">Neu5Ac mutarotase</shortName>
    </alternativeName>
    <alternativeName>
        <fullName evidence="1">Sialic acid epimerase</fullName>
    </alternativeName>
</protein>
<reference key="1">
    <citation type="journal article" date="2001" name="Proc. Natl. Acad. Sci. U.S.A.">
        <title>Complete genomic sequence of Pasteurella multocida Pm70.</title>
        <authorList>
            <person name="May B.J."/>
            <person name="Zhang Q."/>
            <person name="Li L.L."/>
            <person name="Paustian M.L."/>
            <person name="Whittam T.S."/>
            <person name="Kapur V."/>
        </authorList>
    </citation>
    <scope>NUCLEOTIDE SEQUENCE [LARGE SCALE GENOMIC DNA]</scope>
    <source>
        <strain>Pm70</strain>
    </source>
</reference>
<sequence>MKFTKTALFTVLAATAFAAQAGQYPDLPEGIKAGAGALIGDTVYVGLGGTGTTKFYSLNLKDPKEWKEIAEFPGGKRNQPVAAGVNGKLYVFGGFQDTDVAKNQIINDAYEYNPADNTWTKLSTRSPRSTSVGASVAADGGKIYFVGGVNHEIWNGLFQDVKAAGGDKEKEKAIFDPYFNLRAQDFFFSPEIISYEPANNVWRNEGYFPYSGRAGAAVAIKDGKLLVVNGEVKAGLRSPGTALGTIGKDGVTWKKLGDLPAPTGYDKQDGIAGGMGGYTNGHYIVTGGANFPGALANYEKGIMDAHRTGGLKKTYHKAVYALDGKTGNWKIVGELPATIGYGLAVSYNNKVLLIGGETDGGKPLSAVQTMSYDGKKLTVE</sequence>
<keyword id="KW-0119">Carbohydrate metabolism</keyword>
<keyword id="KW-0413">Isomerase</keyword>
<keyword id="KW-0880">Kelch repeat</keyword>
<keyword id="KW-0574">Periplasm</keyword>
<keyword id="KW-1185">Reference proteome</keyword>
<keyword id="KW-0677">Repeat</keyword>
<keyword id="KW-0732">Signal</keyword>
<comment type="function">
    <text evidence="1">Converts alpha-N-acetylneuranimic acid (Neu5Ac) to the beta-anomer, accelerating the equilibrium between the alpha- and beta-anomers. Probably facilitates sialidase-negative bacteria to compete successfully for limited amounts of extracellular Neu5Ac, which is likely taken up in the beta-anomer. In addition, the rapid removal of sialic acid from solution might be advantageous to the bacterium to damp down host responses.</text>
</comment>
<comment type="catalytic activity">
    <reaction evidence="1">
        <text>N-acetyl-alpha-neuraminate = N-acetyl-beta-neuraminate</text>
        <dbReference type="Rhea" id="RHEA:25233"/>
        <dbReference type="ChEBI" id="CHEBI:58705"/>
        <dbReference type="ChEBI" id="CHEBI:58770"/>
        <dbReference type="EC" id="5.1.3.24"/>
    </reaction>
</comment>
<comment type="subunit">
    <text evidence="1">Homodimer.</text>
</comment>
<comment type="subcellular location">
    <subcellularLocation>
        <location evidence="1">Periplasm</location>
    </subcellularLocation>
</comment>
<comment type="similarity">
    <text evidence="1">Belongs to the NanM family.</text>
</comment>